<sequence>MAITKIILQQMVTMDQNSITASKYPKYTVVLSNSISSITAADVTSAIESSKASGPAAKQSEINAKQSELNAKDSENEAEISATSSQQSATQSASSATASANSAKAAKTSETNANNSKNAAKTSETNAASSASSASSFATAAENSARAAKTSETNAGNSAQAADASKTAAANSATAAKTSETNAKKSETAAKTSETNAKTSENKAKEYLDMASELVSPVTQYDWPVGTNNNSVYVKIAKLTDPGAVSCHLTLMITNGGNYGSSYGNIDFVEISARGLNDARGVTSENITKFLSVRRLGSPNLAWDNQLRYGLVEGDGYFEVWCYQRAFIKETRVAVLAQTGRTELYIPEGFVSQDTQPSGFIESLAARIYDQVNKPTKADLGLENAMLVGAFGLGGNGLSYSSVQSNVDLINKLKANGGQYWRAARESGANVDINDHGSGFYSHCGDTHAAINVQYNTGIVKVLATTDRNLASDIVYANTLYGTANKPSKSDVGLGNVTNDAQVKKAGDVMSGDLDIRKETPSIRLKSTQGNAHLWFMNNDGGERGVIWSPPNNGSLGEIHIRAKTSDGTSTGDFIVRHDGRIEAKDAKISYKISSRTAEFSNDDTNTAATNLRVSGKQHTPIMLVRDSDSNVSVGFKLNNMNAKLLGIDIDGDLAFGENPDHKQNSKIVTRKMMDAGFSVAGLMDFTNGFAGPWEAKNISDQELDLNSLMIKKSDPGSIRVYQCVSAGGGNNITNKPSGIGGNFILYVESIRKVGDTDFTNRQRLFGTDLNREFTRYCSNGTWSAWRESVVSGMNQDVSVKSMSVSGRLSGNELSVGGAGVLNGNLGVGGGATSKMPSSDKGIVIGRGSIVREGGEGRLILSSSGGTDRLLQLRPAGATSLDNQVEISCTSASAGDTKISFGQGAAIRCNNAGSPIISAKAGQMIYFRPNGDGISEGQMILSPNGDLVVKGGVNSKEIDVTASQSLPLKETTATTGIGVNFIGDSATECSFGIENTAGGSAVFHNYTRGASNSVTKNNQLLGGYGSRPWLGSTYTEHSNAALHFLGAGDTSATNHGGWIRLLVTPKGKTISDRVPAFRLSDNGDLWLVPDGAMHSDLGLVRSIETLNAAVPRFNAPSIQDGRGLKIVAPQAPEIDLIAPRGSGASAPAIRAMWCDGSLADTTRYIGATQPGSTFYIGASGHDGEKFDSMRGSVAIKSAGGWGPTSTPTQVVLETCESGSISRLPRWGVDHNGTLMPMADNRYNLGWGSGRVKQVYAVNGTINTSDARLKNDVRAMSDPETEAAKAIAKEIGFWTWKEQADMNDIREHCGLTVQRAIEIMESFGLDPFKYGFICYDKWDEHTVVSEYGPANEDGTENPIYKTIPAGDHYSFRLEELNLFIAKGFEARLSAIEDKLGM</sequence>
<keyword id="KW-0002">3D-structure</keyword>
<keyword id="KW-0175">Coiled coil</keyword>
<keyword id="KW-0945">Host-virus interaction</keyword>
<keyword id="KW-0378">Hydrolase</keyword>
<keyword id="KW-0426">Late protein</keyword>
<keyword id="KW-0645">Protease</keyword>
<keyword id="KW-1185">Reference proteome</keyword>
<keyword id="KW-0720">Serine protease</keyword>
<keyword id="KW-1233">Viral attachment to host adhesion receptor</keyword>
<keyword id="KW-1161">Viral attachment to host cell</keyword>
<keyword id="KW-1230">Viral tail fiber protein</keyword>
<keyword id="KW-1227">Viral tail protein</keyword>
<keyword id="KW-0946">Virion</keyword>
<keyword id="KW-1160">Virus entry into host cell</keyword>
<comment type="function">
    <molecule>Mature tail spike protein</molecule>
    <text evidence="6 9">Assembles together with p132 to form the three L-shaped long tail fibers and the collar structure at the junction between the tail tube and the conical tail tip (PubMed:24198424). The three L-shaped long tail fibers recognize the host lipopolysaccharides that serve as adhesion receptor for virus entry (PubMed:7045389). Each fiber consists of a thin proximal rod of about 30 nm connected by a hinge to a thicker distal part of about 47 nm (PubMed:24198424).</text>
</comment>
<comment type="subunit">
    <text evidence="7 9">Homotrimer (PubMed:24316831). Interacts with the O-antigens of host lipopolysaccharides (PubMed:7045389).</text>
</comment>
<comment type="subcellular location">
    <subcellularLocation>
        <location evidence="6">Virion</location>
    </subcellularLocation>
    <text evidence="6">Component of the tail. Forms the L-shaped side fibers and are anchored onto the p132 dodecameric ring.</text>
</comment>
<comment type="PTM">
    <text evidence="7 8">The cleaved C-terminus functions as an intramolecular chaperone and is removed by an autoproteolytic process after correct trimerization and folding.</text>
</comment>
<feature type="chain" id="PRO_0000458685" description="Side tail fiber protein pb1">
    <location>
        <begin position="1"/>
        <end position="1396"/>
    </location>
</feature>
<feature type="chain" id="PRO_0000165221" description="Mature tail spike protein">
    <location>
        <begin position="1"/>
        <end position="1264"/>
    </location>
</feature>
<feature type="chain" id="PRO_0000458686" description="Intramolecular chaperone" evidence="7">
    <location>
        <begin position="1265"/>
        <end position="1396"/>
    </location>
</feature>
<feature type="domain" description="Peptidase S74" evidence="4">
    <location>
        <begin position="1265"/>
        <end position="1394"/>
    </location>
</feature>
<feature type="region of interest" description="Disordered" evidence="5">
    <location>
        <begin position="51"/>
        <end position="133"/>
    </location>
</feature>
<feature type="region of interest" description="Disordered" evidence="5">
    <location>
        <begin position="145"/>
        <end position="203"/>
    </location>
</feature>
<feature type="coiled-coil region" evidence="3">
    <location>
        <begin position="187"/>
        <end position="214"/>
    </location>
</feature>
<feature type="coiled-coil region" evidence="8">
    <location>
        <begin position="1263"/>
        <end position="1396"/>
    </location>
</feature>
<feature type="compositionally biased region" description="Polar residues" evidence="5">
    <location>
        <begin position="60"/>
        <end position="69"/>
    </location>
</feature>
<feature type="compositionally biased region" description="Low complexity" evidence="5">
    <location>
        <begin position="81"/>
        <end position="133"/>
    </location>
</feature>
<feature type="compositionally biased region" description="Low complexity" evidence="5">
    <location>
        <begin position="157"/>
        <end position="181"/>
    </location>
</feature>
<feature type="compositionally biased region" description="Polar residues" evidence="5">
    <location>
        <begin position="189"/>
        <end position="199"/>
    </location>
</feature>
<feature type="site" description="Cleavage; by autolysis" evidence="6 7">
    <location>
        <begin position="1264"/>
        <end position="1265"/>
    </location>
</feature>
<feature type="sequence conflict" description="In Ref. 5; AAU05270, 3; AAX12061 and 4; CAJ29339." evidence="11" ref="5 3 4">
    <original>DV</original>
    <variation>EL</variation>
    <location>
        <begin position="42"/>
        <end position="43"/>
    </location>
</feature>
<feature type="sequence conflict" description="In Ref. 5; AAU05270, 3; AAX12061 and 4; CAJ29339." evidence="11" ref="5 3 4">
    <original>GP</original>
    <variation>AA</variation>
    <location>
        <begin position="54"/>
        <end position="55"/>
    </location>
</feature>
<feature type="sequence conflict" description="In Ref. 5; AAU05270." evidence="11" ref="5">
    <original>D</original>
    <variation>E</variation>
    <location>
        <position position="1155"/>
    </location>
</feature>
<feature type="strand" evidence="19">
    <location>
        <begin position="990"/>
        <end position="999"/>
    </location>
</feature>
<feature type="strand" evidence="19">
    <location>
        <begin position="1001"/>
        <end position="1007"/>
    </location>
</feature>
<feature type="helix" evidence="19">
    <location>
        <begin position="1010"/>
        <end position="1012"/>
    </location>
</feature>
<feature type="strand" evidence="19">
    <location>
        <begin position="1020"/>
        <end position="1027"/>
    </location>
</feature>
<feature type="strand" evidence="19">
    <location>
        <begin position="1031"/>
        <end position="1034"/>
    </location>
</feature>
<feature type="strand" evidence="19">
    <location>
        <begin position="1039"/>
        <end position="1048"/>
    </location>
</feature>
<feature type="strand" evidence="19">
    <location>
        <begin position="1057"/>
        <end position="1064"/>
    </location>
</feature>
<feature type="helix" evidence="19">
    <location>
        <begin position="1070"/>
        <end position="1072"/>
    </location>
</feature>
<feature type="strand" evidence="19">
    <location>
        <begin position="1074"/>
        <end position="1079"/>
    </location>
</feature>
<feature type="strand" evidence="19">
    <location>
        <begin position="1085"/>
        <end position="1087"/>
    </location>
</feature>
<feature type="turn" evidence="17">
    <location>
        <begin position="1090"/>
        <end position="1092"/>
    </location>
</feature>
<feature type="helix" evidence="19">
    <location>
        <begin position="1095"/>
        <end position="1097"/>
    </location>
</feature>
<feature type="helix" evidence="19">
    <location>
        <begin position="1103"/>
        <end position="1109"/>
    </location>
</feature>
<feature type="helix" evidence="19">
    <location>
        <begin position="1117"/>
        <end position="1119"/>
    </location>
</feature>
<feature type="strand" evidence="19">
    <location>
        <begin position="1122"/>
        <end position="1127"/>
    </location>
</feature>
<feature type="strand" evidence="19">
    <location>
        <begin position="1133"/>
        <end position="1139"/>
    </location>
</feature>
<feature type="strand" evidence="19">
    <location>
        <begin position="1148"/>
        <end position="1156"/>
    </location>
</feature>
<feature type="strand" evidence="19">
    <location>
        <begin position="1158"/>
        <end position="1162"/>
    </location>
</feature>
<feature type="strand" evidence="19">
    <location>
        <begin position="1173"/>
        <end position="1180"/>
    </location>
</feature>
<feature type="strand" evidence="19">
    <location>
        <begin position="1190"/>
        <end position="1199"/>
    </location>
</feature>
<feature type="strand" evidence="19">
    <location>
        <begin position="1208"/>
        <end position="1215"/>
    </location>
</feature>
<feature type="strand" evidence="19">
    <location>
        <begin position="1222"/>
        <end position="1228"/>
    </location>
</feature>
<feature type="strand" evidence="19">
    <location>
        <begin position="1234"/>
        <end position="1238"/>
    </location>
</feature>
<feature type="strand" evidence="19">
    <location>
        <begin position="1244"/>
        <end position="1246"/>
    </location>
</feature>
<feature type="strand" evidence="19">
    <location>
        <begin position="1254"/>
        <end position="1258"/>
    </location>
</feature>
<feature type="strand" evidence="18">
    <location>
        <begin position="1261"/>
        <end position="1263"/>
    </location>
</feature>
<feature type="helix" evidence="18">
    <location>
        <begin position="1266"/>
        <end position="1268"/>
    </location>
</feature>
<feature type="helix" evidence="18">
    <location>
        <begin position="1277"/>
        <end position="1287"/>
    </location>
</feature>
<feature type="strand" evidence="18">
    <location>
        <begin position="1291"/>
        <end position="1293"/>
    </location>
</feature>
<feature type="strand" evidence="18">
    <location>
        <begin position="1306"/>
        <end position="1309"/>
    </location>
</feature>
<feature type="helix" evidence="18">
    <location>
        <begin position="1312"/>
        <end position="1321"/>
    </location>
</feature>
<feature type="helix" evidence="18">
    <location>
        <begin position="1326"/>
        <end position="1328"/>
    </location>
</feature>
<feature type="strand" evidence="18">
    <location>
        <begin position="1332"/>
        <end position="1337"/>
    </location>
</feature>
<feature type="strand" evidence="18">
    <location>
        <begin position="1340"/>
        <end position="1346"/>
    </location>
</feature>
<feature type="strand" evidence="18">
    <location>
        <begin position="1357"/>
        <end position="1362"/>
    </location>
</feature>
<feature type="strand" evidence="18">
    <location>
        <begin position="1365"/>
        <end position="1370"/>
    </location>
</feature>
<feature type="helix" evidence="18">
    <location>
        <begin position="1372"/>
        <end position="1393"/>
    </location>
</feature>
<reference key="1">
    <citation type="journal article" date="1995" name="FEBS Lett.">
        <title>The nucleotide sequence of the bacteriophage T5 ltf gene.</title>
        <authorList>
            <person name="Kaliman A.V."/>
            <person name="Kulshin V.E."/>
            <person name="Shlyapnikov M.G."/>
            <person name="Ksenzenko V.N."/>
            <person name="Kryukov V.M."/>
        </authorList>
    </citation>
    <scope>NUCLEOTIDE SEQUENCE [GENOMIC DNA]</scope>
</reference>
<reference key="2">
    <citation type="submission" date="2004-01" db="EMBL/GenBank/DDBJ databases">
        <title>Bacteriophage T5 complete genome.</title>
        <authorList>
            <person name="Ksenzenko V.N."/>
            <person name="Kaliman A.V."/>
            <person name="Krutilina A.I."/>
            <person name="Shlyapnikov M.G."/>
        </authorList>
    </citation>
    <scope>NUCLEOTIDE SEQUENCE [LARGE SCALE GENOMIC DNA]</scope>
</reference>
<reference key="3">
    <citation type="journal article" date="2005" name="Virology">
        <title>Complete genome sequence of bacteriophage T5.</title>
        <authorList>
            <person name="Wang J."/>
            <person name="Jiang Y."/>
            <person name="Vincent M."/>
            <person name="Sun Y."/>
            <person name="Yu H."/>
            <person name="Wang J."/>
            <person name="Bao Q."/>
            <person name="Kong H."/>
            <person name="Hu S."/>
        </authorList>
    </citation>
    <scope>NUCLEOTIDE SEQUENCE [LARGE SCALE GENOMIC DNA]</scope>
    <scope>INDUCTION</scope>
    <source>
        <strain evidence="13">ATCC 11303-B5</strain>
    </source>
</reference>
<reference key="4">
    <citation type="journal article" date="2007" name="J. Biol. Chem.">
        <title>Characterization of a novel intramolecular chaperone domain conserved in endosialidases and other bacteriophage tail spike and fiber proteins.</title>
        <authorList>
            <person name="Schwarzer D."/>
            <person name="Stummeyer K."/>
            <person name="Gerardy-Schahn R."/>
            <person name="Muehlenhoff M."/>
        </authorList>
    </citation>
    <scope>NUCLEOTIDE SEQUENCE [GENOMIC DNA]</scope>
    <source>
        <strain evidence="14">ATCC 11303-B5</strain>
    </source>
</reference>
<reference key="5">
    <citation type="journal article" date="2014" name="J. Virol.">
        <title>Insights into bacteriophage T5 structure from analysis of its morphogenesis genes and protein components.</title>
        <authorList>
            <person name="Zivanovic Y."/>
            <person name="Confalonieri F."/>
            <person name="Ponchon L."/>
            <person name="Lurz R."/>
            <person name="Chami M."/>
            <person name="Flayhan A."/>
            <person name="Renouard M."/>
            <person name="Huet A."/>
            <person name="Decottignies P."/>
            <person name="Davidson A.R."/>
            <person name="Breyton C."/>
            <person name="Boulanger P."/>
        </authorList>
    </citation>
    <scope>NUCLEOTIDE SEQUENCE [LARGE SCALE GENOMIC DNA]</scope>
    <scope>SUBCELLULAR LOCATION</scope>
    <scope>FUNCTION</scope>
    <scope>PROTEOLYTIC CLEAVAGE</scope>
    <source>
        <strain>St0 deletion mutant</strain>
    </source>
</reference>
<reference key="6">
    <citation type="journal article" date="1982" name="J. Virol.">
        <title>Polymannose O-antigens of Escherichia coli, the binding sites for the reversible adsorption of bacteriophage T5+ via the L-shaped tail fibers.</title>
        <authorList>
            <person name="Heller K."/>
            <person name="Braun V."/>
        </authorList>
    </citation>
    <scope>INTERACTION WITH HOST POLYMANNOSE O-ANTIGENS</scope>
    <scope>FUNCTION</scope>
</reference>
<reference key="7">
    <citation type="journal article" date="1988" name="Nucleic Acids Res.">
        <title>The nucleotide sequence of bacteriophage T5 DNA at the region between early and late genes.</title>
        <authorList>
            <person name="Kaliman A.V."/>
            <person name="Kryukov V.M."/>
            <person name="Bayev A.A."/>
        </authorList>
    </citation>
    <scope>PRELIMINARY PARTIAL NUCLEOTIDE SEQUENCE</scope>
</reference>
<reference evidence="15 16" key="8">
    <citation type="journal article" date="2013" name="Acta Crystallogr. F">
        <title>Crystallization of the C-terminal domain of the bacteriophage T5 L-shaped fibre.</title>
        <authorList>
            <person name="Garcia-Doval C."/>
            <person name="Luque D."/>
            <person name="Caston J.R."/>
            <person name="Boulanger P."/>
            <person name="van Raaij M.J."/>
        </authorList>
    </citation>
    <scope>X-RAY CRYSTALLOGRAPHY (2.52 ANGSTROMS) OF 970-1396</scope>
    <scope>SUBUNIT</scope>
    <scope>PROTEOLYTIC CLEAVAGE</scope>
</reference>
<reference key="9">
    <citation type="journal article" date="2015" name="Viruses">
        <title>Structure of the receptor-binding carboxy-terminal domain of the bacteriophage T5 L-shaped tail fibre with and without its intra-molecular chaperone.</title>
        <authorList>
            <person name="Garcia-Doval C."/>
            <person name="Caston J.R."/>
            <person name="Luque D."/>
            <person name="Granell M."/>
            <person name="Otero J.M."/>
            <person name="Llamas-Saiz A.L."/>
            <person name="Renouard M."/>
            <person name="Boulanger P."/>
            <person name="van Raaij M.J."/>
        </authorList>
    </citation>
    <scope>X-RAY CRYSTALLOGRAPHY (2.30 ANGSTROMS) OF 970-1263</scope>
    <scope>SUBUNIT</scope>
</reference>
<dbReference type="EC" id="3.4.21.-"/>
<dbReference type="EMBL" id="AY543070">
    <property type="protein sequence ID" value="AAQ92751.2"/>
    <property type="molecule type" value="Genomic_DNA"/>
</dbReference>
<dbReference type="EMBL" id="AY692264">
    <property type="protein sequence ID" value="AAU05270.1"/>
    <property type="molecule type" value="Genomic_DNA"/>
</dbReference>
<dbReference type="EMBL" id="AY587007">
    <property type="protein sequence ID" value="AAX12061.1"/>
    <property type="molecule type" value="Genomic_DNA"/>
</dbReference>
<dbReference type="EMBL" id="AM084272">
    <property type="protein sequence ID" value="CAJ29339.1"/>
    <property type="molecule type" value="Genomic_DNA"/>
</dbReference>
<dbReference type="PIR" id="S01982">
    <property type="entry name" value="S01982"/>
</dbReference>
<dbReference type="PIR" id="S65934">
    <property type="entry name" value="S36851"/>
</dbReference>
<dbReference type="RefSeq" id="YP_006961.1">
    <property type="nucleotide sequence ID" value="NC_005859.1"/>
</dbReference>
<dbReference type="PDB" id="4UW7">
    <property type="method" value="X-ray"/>
    <property type="resolution" value="2.52 A"/>
    <property type="chains" value="A/B/C=970-1263"/>
</dbReference>
<dbReference type="PDB" id="4UW8">
    <property type="method" value="X-ray"/>
    <property type="resolution" value="2.52 A"/>
    <property type="chains" value="A/B/C/D/E/F/G/H/I=970-1396"/>
</dbReference>
<dbReference type="PDB" id="5AQ5">
    <property type="method" value="X-ray"/>
    <property type="resolution" value="2.30 A"/>
    <property type="chains" value="A/B/C/D/E/F/G/H/I/J/K/L=970-1263"/>
</dbReference>
<dbReference type="PDBsum" id="4UW7"/>
<dbReference type="PDBsum" id="4UW8"/>
<dbReference type="PDBsum" id="5AQ5"/>
<dbReference type="SMR" id="P13390"/>
<dbReference type="GeneID" id="2777639"/>
<dbReference type="KEGG" id="vg:2777639"/>
<dbReference type="EvolutionaryTrace" id="P13390"/>
<dbReference type="Proteomes" id="UP000002107">
    <property type="component" value="Genome"/>
</dbReference>
<dbReference type="Proteomes" id="UP000002141">
    <property type="component" value="Segment"/>
</dbReference>
<dbReference type="Proteomes" id="UP000002503">
    <property type="component" value="Segment"/>
</dbReference>
<dbReference type="GO" id="GO:0098024">
    <property type="term" value="C:virus tail, fiber"/>
    <property type="evidence" value="ECO:0000314"/>
    <property type="project" value="UniProtKB"/>
</dbReference>
<dbReference type="GO" id="GO:0008236">
    <property type="term" value="F:serine-type peptidase activity"/>
    <property type="evidence" value="ECO:0007669"/>
    <property type="project" value="UniProtKB-KW"/>
</dbReference>
<dbReference type="GO" id="GO:0098671">
    <property type="term" value="P:adhesion receptor-mediated virion attachment to host cell"/>
    <property type="evidence" value="ECO:0007669"/>
    <property type="project" value="UniProtKB-KW"/>
</dbReference>
<dbReference type="GO" id="GO:0039638">
    <property type="term" value="P:lipopolysaccharide-mediated virion attachment to host cell"/>
    <property type="evidence" value="ECO:0000314"/>
    <property type="project" value="UniProtKB"/>
</dbReference>
<dbReference type="GO" id="GO:0006508">
    <property type="term" value="P:proteolysis"/>
    <property type="evidence" value="ECO:0007669"/>
    <property type="project" value="UniProtKB-KW"/>
</dbReference>
<dbReference type="GO" id="GO:0046718">
    <property type="term" value="P:symbiont entry into host cell"/>
    <property type="evidence" value="ECO:0007669"/>
    <property type="project" value="UniProtKB-KW"/>
</dbReference>
<dbReference type="CDD" id="cd10144">
    <property type="entry name" value="Peptidase_S74_CIMCD"/>
    <property type="match status" value="1"/>
</dbReference>
<dbReference type="CDD" id="cd19958">
    <property type="entry name" value="pyocin_knob"/>
    <property type="match status" value="1"/>
</dbReference>
<dbReference type="Gene3D" id="1.10.10.10">
    <property type="entry name" value="Winged helix-like DNA-binding domain superfamily/Winged helix DNA-binding domain"/>
    <property type="match status" value="1"/>
</dbReference>
<dbReference type="InterPro" id="IPR030392">
    <property type="entry name" value="S74_ICA"/>
</dbReference>
<dbReference type="InterPro" id="IPR036388">
    <property type="entry name" value="WH-like_DNA-bd_sf"/>
</dbReference>
<dbReference type="Pfam" id="PF13884">
    <property type="entry name" value="Peptidase_S74"/>
    <property type="match status" value="1"/>
</dbReference>
<dbReference type="PROSITE" id="PS51688">
    <property type="entry name" value="ICA"/>
    <property type="match status" value="1"/>
</dbReference>
<accession>P13390</accession>
<accession>O48502</accession>
<accession>Q5DMH0</accession>
<accession>Q66LT2</accession>
<organismHost>
    <name type="scientific">Escherichia coli</name>
    <dbReference type="NCBI Taxonomy" id="562"/>
</organismHost>
<proteinExistence type="evidence at protein level"/>
<evidence type="ECO:0000250" key="1">
    <source>
        <dbReference type="UniProtKB" id="P49714"/>
    </source>
</evidence>
<evidence type="ECO:0000250" key="2">
    <source>
        <dbReference type="UniProtKB" id="Q04830"/>
    </source>
</evidence>
<evidence type="ECO:0000255" key="3"/>
<evidence type="ECO:0000255" key="4">
    <source>
        <dbReference type="PROSITE-ProRule" id="PRU01025"/>
    </source>
</evidence>
<evidence type="ECO:0000256" key="5">
    <source>
        <dbReference type="SAM" id="MobiDB-lite"/>
    </source>
</evidence>
<evidence type="ECO:0000269" key="6">
    <source>
    </source>
</evidence>
<evidence type="ECO:0000269" key="7">
    <source>
    </source>
</evidence>
<evidence type="ECO:0000269" key="8">
    <source>
    </source>
</evidence>
<evidence type="ECO:0000269" key="9">
    <source>
    </source>
</evidence>
<evidence type="ECO:0000303" key="10">
    <source>
    </source>
</evidence>
<evidence type="ECO:0000305" key="11"/>
<evidence type="ECO:0000312" key="12">
    <source>
        <dbReference type="EMBL" id="AAU05270.1"/>
    </source>
</evidence>
<evidence type="ECO:0000312" key="13">
    <source>
        <dbReference type="EMBL" id="AAX12061.1"/>
    </source>
</evidence>
<evidence type="ECO:0000312" key="14">
    <source>
        <dbReference type="EMBL" id="CAJ29339.1"/>
    </source>
</evidence>
<evidence type="ECO:0007744" key="15">
    <source>
        <dbReference type="PDB" id="4UW7"/>
    </source>
</evidence>
<evidence type="ECO:0007744" key="16">
    <source>
        <dbReference type="PDB" id="4UW8"/>
    </source>
</evidence>
<evidence type="ECO:0007829" key="17">
    <source>
        <dbReference type="PDB" id="4UW7"/>
    </source>
</evidence>
<evidence type="ECO:0007829" key="18">
    <source>
        <dbReference type="PDB" id="4UW8"/>
    </source>
</evidence>
<evidence type="ECO:0007829" key="19">
    <source>
        <dbReference type="PDB" id="5AQ5"/>
    </source>
</evidence>
<protein>
    <recommendedName>
        <fullName evidence="11">Side tail fiber protein pb1</fullName>
        <shortName evidence="11">STF-pb1</shortName>
        <ecNumber>3.4.21.-</ecNumber>
    </recommendedName>
    <alternativeName>
        <fullName evidence="11">LTF-pb1</fullName>
    </alternativeName>
    <alternativeName>
        <fullName evidence="10">Tail protein pb1</fullName>
    </alternativeName>
    <component>
        <recommendedName>
            <fullName evidence="1">Mature tail spike protein</fullName>
        </recommendedName>
    </component>
    <component>
        <recommendedName>
            <fullName evidence="2">Intramolecular chaperone</fullName>
        </recommendedName>
    </component>
</protein>
<gene>
    <name evidence="11" type="primary">ltf</name>
    <name type="ORF">T5.133</name>
    <name evidence="12" type="ORF">T5p131</name>
</gene>
<organism>
    <name type="scientific">Escherichia phage T5</name>
    <name type="common">Enterobacteria phage T5</name>
    <dbReference type="NCBI Taxonomy" id="2695836"/>
    <lineage>
        <taxon>Viruses</taxon>
        <taxon>Duplodnaviria</taxon>
        <taxon>Heunggongvirae</taxon>
        <taxon>Uroviricota</taxon>
        <taxon>Caudoviricetes</taxon>
        <taxon>Demerecviridae</taxon>
        <taxon>Markadamsvirinae</taxon>
        <taxon>Tequintavirus</taxon>
        <taxon>Tequintavirus T5</taxon>
    </lineage>
</organism>
<name>FIBL1_BPT5</name>